<sequence>MESLLNRLYDALGLDAPEDEPLLIIDDGIQVYFNESDHTLEMCCPFMPLPDDILTLQHFLRLNYTSAVTIGADADNTALVALYRLPQTSTEEEALTGFELFISNVKQLKEHYA</sequence>
<dbReference type="EMBL" id="CP000026">
    <property type="protein sequence ID" value="AAV77678.1"/>
    <property type="molecule type" value="Genomic_DNA"/>
</dbReference>
<dbReference type="RefSeq" id="WP_000444724.1">
    <property type="nucleotide sequence ID" value="NC_006511.1"/>
</dbReference>
<dbReference type="SMR" id="Q5PGB1"/>
<dbReference type="KEGG" id="spt:SPA1760"/>
<dbReference type="HOGENOM" id="CLU_2131737_0_0_6"/>
<dbReference type="Proteomes" id="UP000008185">
    <property type="component" value="Chromosome"/>
</dbReference>
<dbReference type="GO" id="GO:0005737">
    <property type="term" value="C:cytoplasm"/>
    <property type="evidence" value="ECO:0007669"/>
    <property type="project" value="UniProtKB-SubCell"/>
</dbReference>
<dbReference type="CDD" id="cd17022">
    <property type="entry name" value="T3SC_IA_SigE-like"/>
    <property type="match status" value="1"/>
</dbReference>
<dbReference type="Gene3D" id="3.30.1460.10">
    <property type="match status" value="1"/>
</dbReference>
<dbReference type="InterPro" id="IPR013095">
    <property type="entry name" value="T3SS_chaperone"/>
</dbReference>
<dbReference type="NCBIfam" id="NF011749">
    <property type="entry name" value="PRK15202.1"/>
    <property type="match status" value="1"/>
</dbReference>
<dbReference type="Pfam" id="PF07824">
    <property type="entry name" value="Chaperone_III"/>
    <property type="match status" value="1"/>
</dbReference>
<dbReference type="PIRSF" id="PIRSF034754">
    <property type="entry name" value="T3SS_chaperone"/>
    <property type="match status" value="1"/>
</dbReference>
<dbReference type="SUPFAM" id="SSF69635">
    <property type="entry name" value="Type III secretory system chaperone-like"/>
    <property type="match status" value="1"/>
</dbReference>
<reference key="1">
    <citation type="journal article" date="2004" name="Nat. Genet.">
        <title>Comparison of genome degradation in Paratyphi A and Typhi, human-restricted serovars of Salmonella enterica that cause typhoid.</title>
        <authorList>
            <person name="McClelland M."/>
            <person name="Sanderson K.E."/>
            <person name="Clifton S.W."/>
            <person name="Latreille P."/>
            <person name="Porwollik S."/>
            <person name="Sabo A."/>
            <person name="Meyer R."/>
            <person name="Bieri T."/>
            <person name="Ozersky P."/>
            <person name="McLellan M."/>
            <person name="Harkins C.R."/>
            <person name="Wang C."/>
            <person name="Nguyen C."/>
            <person name="Berghoff A."/>
            <person name="Elliott G."/>
            <person name="Kohlberg S."/>
            <person name="Strong C."/>
            <person name="Du F."/>
            <person name="Carter J."/>
            <person name="Kremizki C."/>
            <person name="Layman D."/>
            <person name="Leonard S."/>
            <person name="Sun H."/>
            <person name="Fulton L."/>
            <person name="Nash W."/>
            <person name="Miner T."/>
            <person name="Minx P."/>
            <person name="Delehaunty K."/>
            <person name="Fronick C."/>
            <person name="Magrini V."/>
            <person name="Nhan M."/>
            <person name="Warren W."/>
            <person name="Florea L."/>
            <person name="Spieth J."/>
            <person name="Wilson R.K."/>
        </authorList>
    </citation>
    <scope>NUCLEOTIDE SEQUENCE [LARGE SCALE GENOMIC DNA]</scope>
    <source>
        <strain>ATCC 9150 / SARB42</strain>
    </source>
</reference>
<gene>
    <name type="primary">sigE</name>
    <name type="synonym">pipC</name>
    <name type="ordered locus">SPA1760</name>
</gene>
<name>SIGE_SALPA</name>
<feature type="chain" id="PRO_0000160573" description="Chaperone protein SigE">
    <location>
        <begin position="1"/>
        <end position="113"/>
    </location>
</feature>
<proteinExistence type="inferred from homology"/>
<organism>
    <name type="scientific">Salmonella paratyphi A (strain ATCC 9150 / SARB42)</name>
    <dbReference type="NCBI Taxonomy" id="295319"/>
    <lineage>
        <taxon>Bacteria</taxon>
        <taxon>Pseudomonadati</taxon>
        <taxon>Pseudomonadota</taxon>
        <taxon>Gammaproteobacteria</taxon>
        <taxon>Enterobacterales</taxon>
        <taxon>Enterobacteriaceae</taxon>
        <taxon>Salmonella</taxon>
    </lineage>
</organism>
<evidence type="ECO:0000250" key="1"/>
<evidence type="ECO:0000305" key="2"/>
<protein>
    <recommendedName>
        <fullName>Chaperone protein SigE</fullName>
    </recommendedName>
</protein>
<comment type="function">
    <text evidence="1">Molecular chaperone required for SopB/SigD stabilization and secretion.</text>
</comment>
<comment type="subunit">
    <text evidence="1">Homodimer or higher-order oligomers.</text>
</comment>
<comment type="subcellular location">
    <subcellularLocation>
        <location evidence="2">Cytoplasm</location>
    </subcellularLocation>
</comment>
<comment type="induction">
    <text evidence="1">Transcriptionally regulated by InvF and SicA. Also regulated by SirA (By similarity).</text>
</comment>
<comment type="similarity">
    <text evidence="2">Belongs to the IpgE/SigE chaperone family.</text>
</comment>
<keyword id="KW-0143">Chaperone</keyword>
<keyword id="KW-0963">Cytoplasm</keyword>
<keyword id="KW-0843">Virulence</keyword>
<accession>Q5PGB1</accession>